<organism>
    <name type="scientific">Vibrio cholerae serotype O1 (strain ATCC 39315 / El Tor Inaba N16961)</name>
    <dbReference type="NCBI Taxonomy" id="243277"/>
    <lineage>
        <taxon>Bacteria</taxon>
        <taxon>Pseudomonadati</taxon>
        <taxon>Pseudomonadota</taxon>
        <taxon>Gammaproteobacteria</taxon>
        <taxon>Vibrionales</taxon>
        <taxon>Vibrionaceae</taxon>
        <taxon>Vibrio</taxon>
    </lineage>
</organism>
<accession>Q9KNG5</accession>
<feature type="chain" id="PRO_0000184362" description="Ribosomal RNA small subunit methyltransferase G">
    <location>
        <begin position="1"/>
        <end position="210"/>
    </location>
</feature>
<feature type="binding site" evidence="1">
    <location>
        <position position="76"/>
    </location>
    <ligand>
        <name>S-adenosyl-L-methionine</name>
        <dbReference type="ChEBI" id="CHEBI:59789"/>
    </ligand>
</feature>
<feature type="binding site" evidence="1">
    <location>
        <position position="81"/>
    </location>
    <ligand>
        <name>S-adenosyl-L-methionine</name>
        <dbReference type="ChEBI" id="CHEBI:59789"/>
    </ligand>
</feature>
<feature type="binding site" evidence="1">
    <location>
        <begin position="127"/>
        <end position="128"/>
    </location>
    <ligand>
        <name>S-adenosyl-L-methionine</name>
        <dbReference type="ChEBI" id="CHEBI:59789"/>
    </ligand>
</feature>
<feature type="binding site" evidence="1">
    <location>
        <position position="142"/>
    </location>
    <ligand>
        <name>S-adenosyl-L-methionine</name>
        <dbReference type="ChEBI" id="CHEBI:59789"/>
    </ligand>
</feature>
<reference key="1">
    <citation type="journal article" date="2000" name="Nature">
        <title>DNA sequence of both chromosomes of the cholera pathogen Vibrio cholerae.</title>
        <authorList>
            <person name="Heidelberg J.F."/>
            <person name="Eisen J.A."/>
            <person name="Nelson W.C."/>
            <person name="Clayton R.A."/>
            <person name="Gwinn M.L."/>
            <person name="Dodson R.J."/>
            <person name="Haft D.H."/>
            <person name="Hickey E.K."/>
            <person name="Peterson J.D."/>
            <person name="Umayam L.A."/>
            <person name="Gill S.R."/>
            <person name="Nelson K.E."/>
            <person name="Read T.D."/>
            <person name="Tettelin H."/>
            <person name="Richardson D.L."/>
            <person name="Ermolaeva M.D."/>
            <person name="Vamathevan J.J."/>
            <person name="Bass S."/>
            <person name="Qin H."/>
            <person name="Dragoi I."/>
            <person name="Sellers P."/>
            <person name="McDonald L.A."/>
            <person name="Utterback T.R."/>
            <person name="Fleischmann R.D."/>
            <person name="Nierman W.C."/>
            <person name="White O."/>
            <person name="Salzberg S.L."/>
            <person name="Smith H.O."/>
            <person name="Colwell R.R."/>
            <person name="Mekalanos J.J."/>
            <person name="Venter J.C."/>
            <person name="Fraser C.M."/>
        </authorList>
    </citation>
    <scope>NUCLEOTIDE SEQUENCE [LARGE SCALE GENOMIC DNA]</scope>
    <source>
        <strain>ATCC 39315 / El Tor Inaba N16961</strain>
    </source>
</reference>
<keyword id="KW-0963">Cytoplasm</keyword>
<keyword id="KW-0489">Methyltransferase</keyword>
<keyword id="KW-1185">Reference proteome</keyword>
<keyword id="KW-0698">rRNA processing</keyword>
<keyword id="KW-0949">S-adenosyl-L-methionine</keyword>
<keyword id="KW-0808">Transferase</keyword>
<comment type="function">
    <text evidence="1">Specifically methylates the N7 position of guanine in position 527 of 16S rRNA.</text>
</comment>
<comment type="catalytic activity">
    <reaction evidence="1">
        <text>guanosine(527) in 16S rRNA + S-adenosyl-L-methionine = N(7)-methylguanosine(527) in 16S rRNA + S-adenosyl-L-homocysteine</text>
        <dbReference type="Rhea" id="RHEA:42732"/>
        <dbReference type="Rhea" id="RHEA-COMP:10209"/>
        <dbReference type="Rhea" id="RHEA-COMP:10210"/>
        <dbReference type="ChEBI" id="CHEBI:57856"/>
        <dbReference type="ChEBI" id="CHEBI:59789"/>
        <dbReference type="ChEBI" id="CHEBI:74269"/>
        <dbReference type="ChEBI" id="CHEBI:74480"/>
        <dbReference type="EC" id="2.1.1.170"/>
    </reaction>
</comment>
<comment type="subcellular location">
    <subcellularLocation>
        <location evidence="1">Cytoplasm</location>
    </subcellularLocation>
</comment>
<comment type="similarity">
    <text evidence="1">Belongs to the methyltransferase superfamily. RNA methyltransferase RsmG family.</text>
</comment>
<name>RSMG_VIBCH</name>
<sequence>MNPLRVKLDALISKTSLTVTEQQREQLVGYVQLLDKWNKAYNLTSVRDPMEMLVKHILDSLVVSPHLVGERFIDVGSGPGLPGIPLAIMHPDKEFVLIDSLGKRIRFLKQVIHDLKINNVLPVQSRVEEFDPESGFDGVLSRAFASMTDMVNWCQHLPKPNAGVFLALKGVRPDDEITLLPEWCSVTDIKALQVPELEGERHLVILSRKG</sequence>
<proteinExistence type="inferred from homology"/>
<dbReference type="EC" id="2.1.1.170" evidence="1"/>
<dbReference type="EMBL" id="AE003852">
    <property type="protein sequence ID" value="AAF95913.1"/>
    <property type="molecule type" value="Genomic_DNA"/>
</dbReference>
<dbReference type="PIR" id="F82035">
    <property type="entry name" value="F82035"/>
</dbReference>
<dbReference type="RefSeq" id="NP_232400.1">
    <property type="nucleotide sequence ID" value="NC_002505.1"/>
</dbReference>
<dbReference type="RefSeq" id="WP_001068941.1">
    <property type="nucleotide sequence ID" value="NZ_LT906614.1"/>
</dbReference>
<dbReference type="SMR" id="Q9KNG5"/>
<dbReference type="STRING" id="243277.VC_2774"/>
<dbReference type="DNASU" id="2614951"/>
<dbReference type="EnsemblBacteria" id="AAF95913">
    <property type="protein sequence ID" value="AAF95913"/>
    <property type="gene ID" value="VC_2774"/>
</dbReference>
<dbReference type="KEGG" id="vch:VC_2774"/>
<dbReference type="PATRIC" id="fig|243277.26.peg.2649"/>
<dbReference type="eggNOG" id="COG0357">
    <property type="taxonomic scope" value="Bacteria"/>
</dbReference>
<dbReference type="HOGENOM" id="CLU_065341_2_0_6"/>
<dbReference type="Proteomes" id="UP000000584">
    <property type="component" value="Chromosome 1"/>
</dbReference>
<dbReference type="GO" id="GO:0005829">
    <property type="term" value="C:cytosol"/>
    <property type="evidence" value="ECO:0000318"/>
    <property type="project" value="GO_Central"/>
</dbReference>
<dbReference type="GO" id="GO:0070043">
    <property type="term" value="F:rRNA (guanine-N7-)-methyltransferase activity"/>
    <property type="evidence" value="ECO:0000318"/>
    <property type="project" value="GO_Central"/>
</dbReference>
<dbReference type="CDD" id="cd02440">
    <property type="entry name" value="AdoMet_MTases"/>
    <property type="match status" value="1"/>
</dbReference>
<dbReference type="FunFam" id="3.40.50.150:FF:000032">
    <property type="entry name" value="Ribosomal RNA small subunit methyltransferase G"/>
    <property type="match status" value="1"/>
</dbReference>
<dbReference type="Gene3D" id="3.40.50.150">
    <property type="entry name" value="Vaccinia Virus protein VP39"/>
    <property type="match status" value="1"/>
</dbReference>
<dbReference type="HAMAP" id="MF_00074">
    <property type="entry name" value="16SrRNA_methyltr_G"/>
    <property type="match status" value="1"/>
</dbReference>
<dbReference type="InterPro" id="IPR003682">
    <property type="entry name" value="rRNA_ssu_MeTfrase_G"/>
</dbReference>
<dbReference type="InterPro" id="IPR029063">
    <property type="entry name" value="SAM-dependent_MTases_sf"/>
</dbReference>
<dbReference type="NCBIfam" id="TIGR00138">
    <property type="entry name" value="rsmG_gidB"/>
    <property type="match status" value="1"/>
</dbReference>
<dbReference type="PANTHER" id="PTHR31760">
    <property type="entry name" value="S-ADENOSYL-L-METHIONINE-DEPENDENT METHYLTRANSFERASES SUPERFAMILY PROTEIN"/>
    <property type="match status" value="1"/>
</dbReference>
<dbReference type="PANTHER" id="PTHR31760:SF0">
    <property type="entry name" value="S-ADENOSYL-L-METHIONINE-DEPENDENT METHYLTRANSFERASES SUPERFAMILY PROTEIN"/>
    <property type="match status" value="1"/>
</dbReference>
<dbReference type="Pfam" id="PF02527">
    <property type="entry name" value="GidB"/>
    <property type="match status" value="1"/>
</dbReference>
<dbReference type="PIRSF" id="PIRSF003078">
    <property type="entry name" value="GidB"/>
    <property type="match status" value="1"/>
</dbReference>
<dbReference type="SUPFAM" id="SSF53335">
    <property type="entry name" value="S-adenosyl-L-methionine-dependent methyltransferases"/>
    <property type="match status" value="1"/>
</dbReference>
<protein>
    <recommendedName>
        <fullName evidence="1">Ribosomal RNA small subunit methyltransferase G</fullName>
        <ecNumber evidence="1">2.1.1.170</ecNumber>
    </recommendedName>
    <alternativeName>
        <fullName evidence="1">16S rRNA 7-methylguanosine methyltransferase</fullName>
        <shortName evidence="1">16S rRNA m7G methyltransferase</shortName>
    </alternativeName>
</protein>
<gene>
    <name evidence="1" type="primary">rsmG</name>
    <name type="ordered locus">VC_2774</name>
</gene>
<evidence type="ECO:0000255" key="1">
    <source>
        <dbReference type="HAMAP-Rule" id="MF_00074"/>
    </source>
</evidence>